<sequence>MENEKKLFKKLYSWKEISKHNTIENGIWISIDGLVYDITKFIKHHPGGEQVLILAAGRDVTNLFESYHPMTDLPSKMLKQYEIGQVSTMEFPKYVEKSKFYSTLKERVREHFKKSNKDPKFAFGIIARLIFVYWFLITSYYVSHYAFIENFYLNCLLAIVYSLSNSLFSLHMMHDACHSAISHNPKVWKWLGATYDLFIGASFFYWCNQHVIGHHVYTNIRNADPDIGDSEVDFRIVTPYQNKYWIYKYQHIYAPFLYGLYSIKYRLCDYSVFTEGSIGRVRTANASNFEIISFIIGKLVFIVFRFIIPLQYHSLVNLLTYFFIAEFFFGLYLSFGFQVSHSADNLKIVATSVNENDEPTNVDEDWAIHQIKTTQDYGINSYMCLFFSGGVNLQVVHHLFPSISQEYYGELVPIIKKVCDEYDVHYNIQPTFYAAFKSHIDFLYNMGNNENYVRKSVTD</sequence>
<reference key="1">
    <citation type="journal article" date="2005" name="Nature">
        <title>The genome of the social amoeba Dictyostelium discoideum.</title>
        <authorList>
            <person name="Eichinger L."/>
            <person name="Pachebat J.A."/>
            <person name="Gloeckner G."/>
            <person name="Rajandream M.A."/>
            <person name="Sucgang R."/>
            <person name="Berriman M."/>
            <person name="Song J."/>
            <person name="Olsen R."/>
            <person name="Szafranski K."/>
            <person name="Xu Q."/>
            <person name="Tunggal B."/>
            <person name="Kummerfeld S."/>
            <person name="Madera M."/>
            <person name="Konfortov B.A."/>
            <person name="Rivero F."/>
            <person name="Bankier A.T."/>
            <person name="Lehmann R."/>
            <person name="Hamlin N."/>
            <person name="Davies R."/>
            <person name="Gaudet P."/>
            <person name="Fey P."/>
            <person name="Pilcher K."/>
            <person name="Chen G."/>
            <person name="Saunders D."/>
            <person name="Sodergren E.J."/>
            <person name="Davis P."/>
            <person name="Kerhornou A."/>
            <person name="Nie X."/>
            <person name="Hall N."/>
            <person name="Anjard C."/>
            <person name="Hemphill L."/>
            <person name="Bason N."/>
            <person name="Farbrother P."/>
            <person name="Desany B."/>
            <person name="Just E."/>
            <person name="Morio T."/>
            <person name="Rost R."/>
            <person name="Churcher C.M."/>
            <person name="Cooper J."/>
            <person name="Haydock S."/>
            <person name="van Driessche N."/>
            <person name="Cronin A."/>
            <person name="Goodhead I."/>
            <person name="Muzny D.M."/>
            <person name="Mourier T."/>
            <person name="Pain A."/>
            <person name="Lu M."/>
            <person name="Harper D."/>
            <person name="Lindsay R."/>
            <person name="Hauser H."/>
            <person name="James K.D."/>
            <person name="Quiles M."/>
            <person name="Madan Babu M."/>
            <person name="Saito T."/>
            <person name="Buchrieser C."/>
            <person name="Wardroper A."/>
            <person name="Felder M."/>
            <person name="Thangavelu M."/>
            <person name="Johnson D."/>
            <person name="Knights A."/>
            <person name="Loulseged H."/>
            <person name="Mungall K.L."/>
            <person name="Oliver K."/>
            <person name="Price C."/>
            <person name="Quail M.A."/>
            <person name="Urushihara H."/>
            <person name="Hernandez J."/>
            <person name="Rabbinowitsch E."/>
            <person name="Steffen D."/>
            <person name="Sanders M."/>
            <person name="Ma J."/>
            <person name="Kohara Y."/>
            <person name="Sharp S."/>
            <person name="Simmonds M.N."/>
            <person name="Spiegler S."/>
            <person name="Tivey A."/>
            <person name="Sugano S."/>
            <person name="White B."/>
            <person name="Walker D."/>
            <person name="Woodward J.R."/>
            <person name="Winckler T."/>
            <person name="Tanaka Y."/>
            <person name="Shaulsky G."/>
            <person name="Schleicher M."/>
            <person name="Weinstock G.M."/>
            <person name="Rosenthal A."/>
            <person name="Cox E.C."/>
            <person name="Chisholm R.L."/>
            <person name="Gibbs R.A."/>
            <person name="Loomis W.F."/>
            <person name="Platzer M."/>
            <person name="Kay R.R."/>
            <person name="Williams J.G."/>
            <person name="Dear P.H."/>
            <person name="Noegel A.A."/>
            <person name="Barrell B.G."/>
            <person name="Kuspa A."/>
        </authorList>
    </citation>
    <scope>NUCLEOTIDE SEQUENCE [LARGE SCALE GENOMIC DNA]</scope>
    <source>
        <strain>AX4</strain>
    </source>
</reference>
<proteinExistence type="inferred from homology"/>
<protein>
    <recommendedName>
        <fullName>Probable Delta(5) fatty acid desaturase C</fullName>
        <shortName>Delta-5 fatty acid desaturase C</shortName>
        <ecNumber>1.14.19.-</ecNumber>
    </recommendedName>
</protein>
<gene>
    <name type="ORF">DDB_G0294553</name>
</gene>
<comment type="cofactor">
    <cofactor evidence="1">
        <name>Fe cation</name>
        <dbReference type="ChEBI" id="CHEBI:24875"/>
    </cofactor>
</comment>
<comment type="subcellular location">
    <subcellularLocation>
        <location evidence="4">Membrane</location>
        <topology evidence="4">Multi-pass membrane protein</topology>
    </subcellularLocation>
</comment>
<comment type="domain">
    <text evidence="1">The histidine box domains may contain the active site and/or be involved in metal ion binding.</text>
</comment>
<comment type="similarity">
    <text evidence="4">Belongs to the fatty acid desaturase type 1 family.</text>
</comment>
<accession>Q1ZXQ5</accession>
<name>FAD5C_DICDI</name>
<keyword id="KW-0249">Electron transport</keyword>
<keyword id="KW-0275">Fatty acid biosynthesis</keyword>
<keyword id="KW-0276">Fatty acid metabolism</keyword>
<keyword id="KW-0349">Heme</keyword>
<keyword id="KW-0408">Iron</keyword>
<keyword id="KW-0444">Lipid biosynthesis</keyword>
<keyword id="KW-0443">Lipid metabolism</keyword>
<keyword id="KW-0472">Membrane</keyword>
<keyword id="KW-0479">Metal-binding</keyword>
<keyword id="KW-0560">Oxidoreductase</keyword>
<keyword id="KW-1185">Reference proteome</keyword>
<keyword id="KW-0812">Transmembrane</keyword>
<keyword id="KW-1133">Transmembrane helix</keyword>
<keyword id="KW-0813">Transport</keyword>
<feature type="chain" id="PRO_0000327537" description="Probable Delta(5) fatty acid desaturase C">
    <location>
        <begin position="1"/>
        <end position="459"/>
    </location>
</feature>
<feature type="transmembrane region" description="Helical" evidence="2">
    <location>
        <begin position="121"/>
        <end position="141"/>
    </location>
</feature>
<feature type="transmembrane region" description="Helical" evidence="2">
    <location>
        <begin position="151"/>
        <end position="171"/>
    </location>
</feature>
<feature type="transmembrane region" description="Helical" evidence="2">
    <location>
        <begin position="187"/>
        <end position="207"/>
    </location>
</feature>
<feature type="transmembrane region" description="Helical" evidence="2">
    <location>
        <begin position="289"/>
        <end position="309"/>
    </location>
</feature>
<feature type="transmembrane region" description="Helical" evidence="2">
    <location>
        <begin position="315"/>
        <end position="335"/>
    </location>
</feature>
<feature type="domain" description="Cytochrome b5 heme-binding" evidence="3">
    <location>
        <begin position="9"/>
        <end position="87"/>
    </location>
</feature>
<feature type="short sequence motif" description="Histidine box-1">
    <location>
        <begin position="174"/>
        <end position="178"/>
    </location>
</feature>
<feature type="short sequence motif" description="Histidine box-2">
    <location>
        <begin position="210"/>
        <end position="215"/>
    </location>
</feature>
<feature type="short sequence motif" description="Histidine box-3">
    <location>
        <begin position="394"/>
        <end position="398"/>
    </location>
</feature>
<feature type="binding site" description="axial binding residue" evidence="3">
    <location>
        <position position="45"/>
    </location>
    <ligand>
        <name>heme</name>
        <dbReference type="ChEBI" id="CHEBI:30413"/>
    </ligand>
    <ligandPart>
        <name>Fe</name>
        <dbReference type="ChEBI" id="CHEBI:18248"/>
    </ligandPart>
</feature>
<feature type="binding site" description="axial binding residue" evidence="3">
    <location>
        <position position="68"/>
    </location>
    <ligand>
        <name>heme</name>
        <dbReference type="ChEBI" id="CHEBI:30413"/>
    </ligand>
    <ligandPart>
        <name>Fe</name>
        <dbReference type="ChEBI" id="CHEBI:18248"/>
    </ligandPart>
</feature>
<dbReference type="EC" id="1.14.19.-"/>
<dbReference type="EMBL" id="AAFI02000005">
    <property type="protein sequence ID" value="EAS66933.1"/>
    <property type="molecule type" value="Genomic_DNA"/>
</dbReference>
<dbReference type="RefSeq" id="XP_001134469.1">
    <property type="nucleotide sequence ID" value="XM_001134469.1"/>
</dbReference>
<dbReference type="SMR" id="Q1ZXQ5"/>
<dbReference type="FunCoup" id="Q1ZXQ5">
    <property type="interactions" value="59"/>
</dbReference>
<dbReference type="STRING" id="44689.Q1ZXQ5"/>
<dbReference type="PaxDb" id="44689-DDB0231853"/>
<dbReference type="EnsemblProtists" id="EAS66933">
    <property type="protein sequence ID" value="EAS66933"/>
    <property type="gene ID" value="DDB_G0294553"/>
</dbReference>
<dbReference type="GeneID" id="8616927"/>
<dbReference type="KEGG" id="ddi:DDB_G0294553"/>
<dbReference type="dictyBase" id="DDB_G0294553"/>
<dbReference type="VEuPathDB" id="AmoebaDB:DDB_G0294553"/>
<dbReference type="eggNOG" id="KOG4232">
    <property type="taxonomic scope" value="Eukaryota"/>
</dbReference>
<dbReference type="HOGENOM" id="CLU_030320_1_0_1"/>
<dbReference type="InParanoid" id="Q1ZXQ5"/>
<dbReference type="OMA" id="RECTAIF"/>
<dbReference type="PhylomeDB" id="Q1ZXQ5"/>
<dbReference type="PRO" id="PR:Q1ZXQ5"/>
<dbReference type="Proteomes" id="UP000002195">
    <property type="component" value="Chromosome 1"/>
</dbReference>
<dbReference type="GO" id="GO:0016020">
    <property type="term" value="C:membrane"/>
    <property type="evidence" value="ECO:0007669"/>
    <property type="project" value="UniProtKB-SubCell"/>
</dbReference>
<dbReference type="GO" id="GO:0020037">
    <property type="term" value="F:heme binding"/>
    <property type="evidence" value="ECO:0007669"/>
    <property type="project" value="InterPro"/>
</dbReference>
<dbReference type="GO" id="GO:0046872">
    <property type="term" value="F:metal ion binding"/>
    <property type="evidence" value="ECO:0007669"/>
    <property type="project" value="UniProtKB-KW"/>
</dbReference>
<dbReference type="GO" id="GO:0016717">
    <property type="term" value="F:oxidoreductase activity, acting on paired donors, with oxidation of a pair of donors resulting in the reduction of molecular oxygen to two molecules of water"/>
    <property type="evidence" value="ECO:0000318"/>
    <property type="project" value="GO_Central"/>
</dbReference>
<dbReference type="GO" id="GO:0006629">
    <property type="term" value="P:lipid metabolic process"/>
    <property type="evidence" value="ECO:0000318"/>
    <property type="project" value="GO_Central"/>
</dbReference>
<dbReference type="GO" id="GO:0042759">
    <property type="term" value="P:long-chain fatty acid biosynthetic process"/>
    <property type="evidence" value="ECO:0007669"/>
    <property type="project" value="UniProtKB-ARBA"/>
</dbReference>
<dbReference type="GO" id="GO:0006636">
    <property type="term" value="P:unsaturated fatty acid biosynthetic process"/>
    <property type="evidence" value="ECO:0007669"/>
    <property type="project" value="UniProtKB-ARBA"/>
</dbReference>
<dbReference type="CDD" id="cd03506">
    <property type="entry name" value="Delta6-FADS-like"/>
    <property type="match status" value="1"/>
</dbReference>
<dbReference type="FunFam" id="3.10.120.10:FF:000007">
    <property type="entry name" value="Sulfite oxidase, mitochondrial"/>
    <property type="match status" value="1"/>
</dbReference>
<dbReference type="Gene3D" id="3.10.120.10">
    <property type="entry name" value="Cytochrome b5-like heme/steroid binding domain"/>
    <property type="match status" value="1"/>
</dbReference>
<dbReference type="InterPro" id="IPR001199">
    <property type="entry name" value="Cyt_B5-like_heme/steroid-bd"/>
</dbReference>
<dbReference type="InterPro" id="IPR036400">
    <property type="entry name" value="Cyt_B5-like_heme/steroid_sf"/>
</dbReference>
<dbReference type="InterPro" id="IPR018506">
    <property type="entry name" value="Cyt_B5_heme-BS"/>
</dbReference>
<dbReference type="InterPro" id="IPR005804">
    <property type="entry name" value="FA_desaturase_dom"/>
</dbReference>
<dbReference type="InterPro" id="IPR012171">
    <property type="entry name" value="Fatty_acid_desaturase"/>
</dbReference>
<dbReference type="PANTHER" id="PTHR19353:SF19">
    <property type="entry name" value="DELTA(5) FATTY ACID DESATURASE C-RELATED"/>
    <property type="match status" value="1"/>
</dbReference>
<dbReference type="PANTHER" id="PTHR19353">
    <property type="entry name" value="FATTY ACID DESATURASE 2"/>
    <property type="match status" value="1"/>
</dbReference>
<dbReference type="Pfam" id="PF00173">
    <property type="entry name" value="Cyt-b5"/>
    <property type="match status" value="1"/>
</dbReference>
<dbReference type="Pfam" id="PF00487">
    <property type="entry name" value="FA_desaturase"/>
    <property type="match status" value="1"/>
</dbReference>
<dbReference type="PIRSF" id="PIRSF015921">
    <property type="entry name" value="FA_sphinglp_des"/>
    <property type="match status" value="1"/>
</dbReference>
<dbReference type="PRINTS" id="PR00363">
    <property type="entry name" value="CYTOCHROMEB5"/>
</dbReference>
<dbReference type="SMART" id="SM01117">
    <property type="entry name" value="Cyt-b5"/>
    <property type="match status" value="1"/>
</dbReference>
<dbReference type="SUPFAM" id="SSF55856">
    <property type="entry name" value="Cytochrome b5-like heme/steroid binding domain"/>
    <property type="match status" value="1"/>
</dbReference>
<dbReference type="PROSITE" id="PS00191">
    <property type="entry name" value="CYTOCHROME_B5_1"/>
    <property type="match status" value="1"/>
</dbReference>
<dbReference type="PROSITE" id="PS50255">
    <property type="entry name" value="CYTOCHROME_B5_2"/>
    <property type="match status" value="1"/>
</dbReference>
<organism>
    <name type="scientific">Dictyostelium discoideum</name>
    <name type="common">Social amoeba</name>
    <dbReference type="NCBI Taxonomy" id="44689"/>
    <lineage>
        <taxon>Eukaryota</taxon>
        <taxon>Amoebozoa</taxon>
        <taxon>Evosea</taxon>
        <taxon>Eumycetozoa</taxon>
        <taxon>Dictyostelia</taxon>
        <taxon>Dictyosteliales</taxon>
        <taxon>Dictyosteliaceae</taxon>
        <taxon>Dictyostelium</taxon>
    </lineage>
</organism>
<evidence type="ECO:0000250" key="1"/>
<evidence type="ECO:0000255" key="2"/>
<evidence type="ECO:0000255" key="3">
    <source>
        <dbReference type="PROSITE-ProRule" id="PRU00279"/>
    </source>
</evidence>
<evidence type="ECO:0000305" key="4"/>